<reference key="1">
    <citation type="submission" date="2006-09" db="EMBL/GenBank/DDBJ databases">
        <authorList>
            <consortium name="The Klebsiella pneumonia Genome Sequencing Project"/>
            <person name="McClelland M."/>
            <person name="Sanderson E.K."/>
            <person name="Spieth J."/>
            <person name="Clifton W.S."/>
            <person name="Latreille P."/>
            <person name="Sabo A."/>
            <person name="Pepin K."/>
            <person name="Bhonagiri V."/>
            <person name="Porwollik S."/>
            <person name="Ali J."/>
            <person name="Wilson R.K."/>
        </authorList>
    </citation>
    <scope>NUCLEOTIDE SEQUENCE [LARGE SCALE GENOMIC DNA]</scope>
    <source>
        <strain>ATCC 700721 / MGH 78578</strain>
    </source>
</reference>
<gene>
    <name evidence="1" type="primary">dps</name>
    <name type="ordered locus">KPN78578_08160</name>
    <name type="ORF">KPN_00841</name>
</gene>
<organism>
    <name type="scientific">Klebsiella pneumoniae subsp. pneumoniae (strain ATCC 700721 / MGH 78578)</name>
    <dbReference type="NCBI Taxonomy" id="272620"/>
    <lineage>
        <taxon>Bacteria</taxon>
        <taxon>Pseudomonadati</taxon>
        <taxon>Pseudomonadota</taxon>
        <taxon>Gammaproteobacteria</taxon>
        <taxon>Enterobacterales</taxon>
        <taxon>Enterobacteriaceae</taxon>
        <taxon>Klebsiella/Raoultella group</taxon>
        <taxon>Klebsiella</taxon>
        <taxon>Klebsiella pneumoniae complex</taxon>
    </lineage>
</organism>
<name>DPS_KLEP7</name>
<sequence length="167" mass="18708">MSTAKLVKSKASNLVYTRNDVADSEKKATIELLNRQVIQFIDLSLITKQAHWNMRGANFIAVHEMLDGFRTALTEHLDTMAERAVQLGGVALGTTQVINSKTPLQSYPLDIHHVQDHLKALADRYAVVANDVRKAIDEAKDEDTADIFTAASRDLDKFLWFIEANIE</sequence>
<dbReference type="EC" id="1.16.-.-" evidence="1"/>
<dbReference type="EMBL" id="CP000647">
    <property type="protein sequence ID" value="ABR76277.1"/>
    <property type="molecule type" value="Genomic_DNA"/>
</dbReference>
<dbReference type="RefSeq" id="WP_002895841.1">
    <property type="nucleotide sequence ID" value="NC_009648.1"/>
</dbReference>
<dbReference type="SMR" id="A6T6Q6"/>
<dbReference type="STRING" id="272620.KPN_00841"/>
<dbReference type="jPOST" id="A6T6Q6"/>
<dbReference type="PaxDb" id="272620-KPN_00841"/>
<dbReference type="EnsemblBacteria" id="ABR76277">
    <property type="protein sequence ID" value="ABR76277"/>
    <property type="gene ID" value="KPN_00841"/>
</dbReference>
<dbReference type="GeneID" id="93274233"/>
<dbReference type="KEGG" id="kpn:KPN_00841"/>
<dbReference type="HOGENOM" id="CLU_098183_1_2_6"/>
<dbReference type="Proteomes" id="UP000000265">
    <property type="component" value="Chromosome"/>
</dbReference>
<dbReference type="GO" id="GO:0005737">
    <property type="term" value="C:cytoplasm"/>
    <property type="evidence" value="ECO:0007669"/>
    <property type="project" value="UniProtKB-SubCell"/>
</dbReference>
<dbReference type="GO" id="GO:0003677">
    <property type="term" value="F:DNA binding"/>
    <property type="evidence" value="ECO:0007669"/>
    <property type="project" value="UniProtKB-UniRule"/>
</dbReference>
<dbReference type="GO" id="GO:0008199">
    <property type="term" value="F:ferric iron binding"/>
    <property type="evidence" value="ECO:0007669"/>
    <property type="project" value="UniProtKB-UniRule"/>
</dbReference>
<dbReference type="GO" id="GO:0016722">
    <property type="term" value="F:oxidoreductase activity, acting on metal ions"/>
    <property type="evidence" value="ECO:0007669"/>
    <property type="project" value="InterPro"/>
</dbReference>
<dbReference type="GO" id="GO:0030261">
    <property type="term" value="P:chromosome condensation"/>
    <property type="evidence" value="ECO:0007669"/>
    <property type="project" value="UniProtKB-KW"/>
</dbReference>
<dbReference type="GO" id="GO:0006879">
    <property type="term" value="P:intracellular iron ion homeostasis"/>
    <property type="evidence" value="ECO:0007669"/>
    <property type="project" value="UniProtKB-KW"/>
</dbReference>
<dbReference type="CDD" id="cd01043">
    <property type="entry name" value="DPS"/>
    <property type="match status" value="1"/>
</dbReference>
<dbReference type="FunFam" id="1.20.1260.10:FF:000003">
    <property type="entry name" value="DNA protection during starvation protein"/>
    <property type="match status" value="1"/>
</dbReference>
<dbReference type="Gene3D" id="1.20.1260.10">
    <property type="match status" value="1"/>
</dbReference>
<dbReference type="HAMAP" id="MF_01441">
    <property type="entry name" value="Dps"/>
    <property type="match status" value="1"/>
</dbReference>
<dbReference type="InterPro" id="IPR002177">
    <property type="entry name" value="DPS_DNA-bd"/>
</dbReference>
<dbReference type="InterPro" id="IPR023188">
    <property type="entry name" value="DPS_DNA-bd_CS"/>
</dbReference>
<dbReference type="InterPro" id="IPR023067">
    <property type="entry name" value="Dps_gammaproteobac"/>
</dbReference>
<dbReference type="InterPro" id="IPR012347">
    <property type="entry name" value="Ferritin-like"/>
</dbReference>
<dbReference type="InterPro" id="IPR009078">
    <property type="entry name" value="Ferritin-like_SF"/>
</dbReference>
<dbReference type="InterPro" id="IPR008331">
    <property type="entry name" value="Ferritin_DPS_dom"/>
</dbReference>
<dbReference type="NCBIfam" id="NF006975">
    <property type="entry name" value="PRK09448.1"/>
    <property type="match status" value="1"/>
</dbReference>
<dbReference type="PANTHER" id="PTHR42932:SF3">
    <property type="entry name" value="DNA PROTECTION DURING STARVATION PROTEIN"/>
    <property type="match status" value="1"/>
</dbReference>
<dbReference type="PANTHER" id="PTHR42932">
    <property type="entry name" value="GENERAL STRESS PROTEIN 20U"/>
    <property type="match status" value="1"/>
</dbReference>
<dbReference type="Pfam" id="PF00210">
    <property type="entry name" value="Ferritin"/>
    <property type="match status" value="1"/>
</dbReference>
<dbReference type="PIRSF" id="PIRSF005900">
    <property type="entry name" value="Dps"/>
    <property type="match status" value="1"/>
</dbReference>
<dbReference type="PRINTS" id="PR01346">
    <property type="entry name" value="HELNAPAPROT"/>
</dbReference>
<dbReference type="SUPFAM" id="SSF47240">
    <property type="entry name" value="Ferritin-like"/>
    <property type="match status" value="1"/>
</dbReference>
<dbReference type="PROSITE" id="PS00818">
    <property type="entry name" value="DPS_1"/>
    <property type="match status" value="1"/>
</dbReference>
<dbReference type="PROSITE" id="PS00819">
    <property type="entry name" value="DPS_2"/>
    <property type="match status" value="1"/>
</dbReference>
<evidence type="ECO:0000255" key="1">
    <source>
        <dbReference type="HAMAP-Rule" id="MF_01441"/>
    </source>
</evidence>
<accession>A6T6Q6</accession>
<feature type="chain" id="PRO_1000024417" description="DNA protection during starvation protein">
    <location>
        <begin position="1"/>
        <end position="167"/>
    </location>
</feature>
<feature type="binding site" evidence="1">
    <location>
        <position position="51"/>
    </location>
    <ligand>
        <name>Fe cation</name>
        <dbReference type="ChEBI" id="CHEBI:24875"/>
    </ligand>
</feature>
<feature type="binding site" evidence="1">
    <location>
        <position position="78"/>
    </location>
    <ligand>
        <name>Fe cation</name>
        <dbReference type="ChEBI" id="CHEBI:24875"/>
    </ligand>
</feature>
<feature type="binding site" evidence="1">
    <location>
        <position position="82"/>
    </location>
    <ligand>
        <name>Fe cation</name>
        <dbReference type="ChEBI" id="CHEBI:24875"/>
    </ligand>
</feature>
<proteinExistence type="inferred from homology"/>
<comment type="function">
    <text evidence="1">During stationary phase, binds the chromosome non-specifically, forming a highly ordered and stable dps-DNA co-crystal within which chromosomal DNA is condensed and protected from diverse damages. It protects DNA from oxidative damage by sequestering intracellular Fe(2+) ion and storing it in the form of Fe(3+) oxyhydroxide mineral, which can be released after reduction. One hydrogen peroxide oxidizes two Fe(2+) ions, which prevents hydroxyl radical production by the Fenton reaction.</text>
</comment>
<comment type="catalytic activity">
    <reaction evidence="1">
        <text>2 Fe(2+) + H2O2 + 2 H(+) = 2 Fe(3+) + 2 H2O</text>
        <dbReference type="Rhea" id="RHEA:48712"/>
        <dbReference type="ChEBI" id="CHEBI:15377"/>
        <dbReference type="ChEBI" id="CHEBI:15378"/>
        <dbReference type="ChEBI" id="CHEBI:16240"/>
        <dbReference type="ChEBI" id="CHEBI:29033"/>
        <dbReference type="ChEBI" id="CHEBI:29034"/>
    </reaction>
</comment>
<comment type="subunit">
    <text evidence="1">Homododecamer. The 12 subunits form a hollow sphere into which the mineral iron core of up to 500 Fe(3+) can be deposited.</text>
</comment>
<comment type="subcellular location">
    <subcellularLocation>
        <location evidence="1">Cytoplasm</location>
    </subcellularLocation>
</comment>
<comment type="similarity">
    <text evidence="1">Belongs to the Dps family.</text>
</comment>
<protein>
    <recommendedName>
        <fullName evidence="1">DNA protection during starvation protein</fullName>
        <ecNumber evidence="1">1.16.-.-</ecNumber>
    </recommendedName>
</protein>
<keyword id="KW-0963">Cytoplasm</keyword>
<keyword id="KW-0226">DNA condensation</keyword>
<keyword id="KW-0238">DNA-binding</keyword>
<keyword id="KW-0408">Iron</keyword>
<keyword id="KW-0409">Iron storage</keyword>
<keyword id="KW-0479">Metal-binding</keyword>
<keyword id="KW-0560">Oxidoreductase</keyword>